<sequence>MSSLRTHDDTWDIKSSVGTTAVMVAAARAVETEQPDPLIRDPYAKLLVTNSGAGVLWEAMLDPDIAARVEALDEESAAHLHHMRGYQAVRTHFFDTYFADAVAAGIRQIVILASGLDSRAYRLDWPAGTTVYEIDQPQVLAYKSTTLAENGVTPSADRREVAVDLRQDWPAALRAAGFDPTQRTAWLAEGLLMYLPAEAQDRLFTLIGELSPAGSRVAAETAPNHADERRQQMRERFKKVADEIGFEQTVDVGELMYRDDHRADVTEWLNAHGWRATAEHSTAAMRRLGRWIENVPLADDKDAFSDFVVAERR</sequence>
<dbReference type="EC" id="2.1.1.-"/>
<dbReference type="EMBL" id="CP000479">
    <property type="protein sequence ID" value="ABK68130.1"/>
    <property type="molecule type" value="Genomic_DNA"/>
</dbReference>
<dbReference type="SMR" id="A0QMX8"/>
<dbReference type="KEGG" id="mav:MAV_5149"/>
<dbReference type="HOGENOM" id="CLU_056160_2_1_11"/>
<dbReference type="Proteomes" id="UP000001574">
    <property type="component" value="Chromosome"/>
</dbReference>
<dbReference type="GO" id="GO:0008168">
    <property type="term" value="F:methyltransferase activity"/>
    <property type="evidence" value="ECO:0007669"/>
    <property type="project" value="UniProtKB-KW"/>
</dbReference>
<dbReference type="GO" id="GO:0032259">
    <property type="term" value="P:methylation"/>
    <property type="evidence" value="ECO:0007669"/>
    <property type="project" value="UniProtKB-KW"/>
</dbReference>
<dbReference type="FunFam" id="3.40.50.150:FF:000152">
    <property type="entry name" value="S-adenosyl-L-methionine-dependent methyltransferase"/>
    <property type="match status" value="1"/>
</dbReference>
<dbReference type="Gene3D" id="3.40.50.150">
    <property type="entry name" value="Vaccinia Virus protein VP39"/>
    <property type="match status" value="1"/>
</dbReference>
<dbReference type="InterPro" id="IPR007213">
    <property type="entry name" value="Ppm1/Ppm2/Tcmp"/>
</dbReference>
<dbReference type="InterPro" id="IPR029063">
    <property type="entry name" value="SAM-dependent_MTases_sf"/>
</dbReference>
<dbReference type="InterPro" id="IPR011610">
    <property type="entry name" value="SAM_mthyl_Trfase_ML2640-like"/>
</dbReference>
<dbReference type="NCBIfam" id="TIGR00027">
    <property type="entry name" value="mthyl_TIGR00027"/>
    <property type="match status" value="1"/>
</dbReference>
<dbReference type="PANTHER" id="PTHR43619">
    <property type="entry name" value="S-ADENOSYL-L-METHIONINE-DEPENDENT METHYLTRANSFERASE YKTD-RELATED"/>
    <property type="match status" value="1"/>
</dbReference>
<dbReference type="PANTHER" id="PTHR43619:SF2">
    <property type="entry name" value="S-ADENOSYL-L-METHIONINE-DEPENDENT METHYLTRANSFERASES SUPERFAMILY PROTEIN"/>
    <property type="match status" value="1"/>
</dbReference>
<dbReference type="Pfam" id="PF04072">
    <property type="entry name" value="LCM"/>
    <property type="match status" value="1"/>
</dbReference>
<dbReference type="SUPFAM" id="SSF53335">
    <property type="entry name" value="S-adenosyl-L-methionine-dependent methyltransferases"/>
    <property type="match status" value="1"/>
</dbReference>
<evidence type="ECO:0000250" key="1"/>
<evidence type="ECO:0000305" key="2"/>
<name>Y5149_MYCA1</name>
<comment type="function">
    <text evidence="1">Exhibits S-adenosyl-L-methionine-dependent methyltransferase activity.</text>
</comment>
<comment type="similarity">
    <text evidence="2">Belongs to the UPF0677 family.</text>
</comment>
<reference key="1">
    <citation type="submission" date="2006-10" db="EMBL/GenBank/DDBJ databases">
        <authorList>
            <person name="Fleischmann R.D."/>
            <person name="Dodson R.J."/>
            <person name="Haft D.H."/>
            <person name="Merkel J.S."/>
            <person name="Nelson W.C."/>
            <person name="Fraser C.M."/>
        </authorList>
    </citation>
    <scope>NUCLEOTIDE SEQUENCE [LARGE SCALE GENOMIC DNA]</scope>
    <source>
        <strain>104</strain>
    </source>
</reference>
<accession>A0QMX8</accession>
<proteinExistence type="inferred from homology"/>
<organism>
    <name type="scientific">Mycobacterium avium (strain 104)</name>
    <dbReference type="NCBI Taxonomy" id="243243"/>
    <lineage>
        <taxon>Bacteria</taxon>
        <taxon>Bacillati</taxon>
        <taxon>Actinomycetota</taxon>
        <taxon>Actinomycetes</taxon>
        <taxon>Mycobacteriales</taxon>
        <taxon>Mycobacteriaceae</taxon>
        <taxon>Mycobacterium</taxon>
        <taxon>Mycobacterium avium complex (MAC)</taxon>
    </lineage>
</organism>
<keyword id="KW-0489">Methyltransferase</keyword>
<keyword id="KW-0949">S-adenosyl-L-methionine</keyword>
<keyword id="KW-0808">Transferase</keyword>
<gene>
    <name type="ordered locus">MAV_5149</name>
</gene>
<feature type="chain" id="PRO_0000361116" description="Putative S-adenosyl-L-methionine-dependent methyltransferase MAV_5149">
    <location>
        <begin position="1"/>
        <end position="313"/>
    </location>
</feature>
<feature type="binding site" evidence="1">
    <location>
        <position position="135"/>
    </location>
    <ligand>
        <name>S-adenosyl-L-methionine</name>
        <dbReference type="ChEBI" id="CHEBI:59789"/>
    </ligand>
</feature>
<feature type="binding site" evidence="1">
    <location>
        <begin position="164"/>
        <end position="165"/>
    </location>
    <ligand>
        <name>S-adenosyl-L-methionine</name>
        <dbReference type="ChEBI" id="CHEBI:59789"/>
    </ligand>
</feature>
<protein>
    <recommendedName>
        <fullName>Putative S-adenosyl-L-methionine-dependent methyltransferase MAV_5149</fullName>
        <ecNumber>2.1.1.-</ecNumber>
    </recommendedName>
</protein>